<sequence>MININNNMKTIIILTIMILTIIIFTRTINGLQLEPVKFMNQKSGLIEIASNNLNLQSLTTSVKNGLIAKSVNLNDNFINSVSNEIYLALGVTNTNVQRMTWQVNIASNVGTMDVFYIEATIGEKFVVINFHTIQITQPMPQLYDVVEKCERTGSRRYGIAGPRARECRYHNVPRSLNTDELTLVTKTLESKVQEAIKIMLQ</sequence>
<proteinExistence type="predicted"/>
<comment type="subcellular location">
    <subcellularLocation>
        <location evidence="2">Membrane</location>
        <topology evidence="2">Single-pass membrane protein</topology>
    </subcellularLocation>
</comment>
<gene>
    <name type="ordered locus">MIMI_R799</name>
</gene>
<accession>Q5UR63</accession>
<name>YR799_MIMIV</name>
<organism>
    <name type="scientific">Acanthamoeba polyphaga mimivirus</name>
    <name type="common">APMV</name>
    <dbReference type="NCBI Taxonomy" id="212035"/>
    <lineage>
        <taxon>Viruses</taxon>
        <taxon>Varidnaviria</taxon>
        <taxon>Bamfordvirae</taxon>
        <taxon>Nucleocytoviricota</taxon>
        <taxon>Megaviricetes</taxon>
        <taxon>Imitervirales</taxon>
        <taxon>Mimiviridae</taxon>
        <taxon>Megamimivirinae</taxon>
        <taxon>Mimivirus</taxon>
        <taxon>Mimivirus bradfordmassiliense</taxon>
    </lineage>
</organism>
<reference key="1">
    <citation type="journal article" date="2004" name="Science">
        <title>The 1.2-megabase genome sequence of Mimivirus.</title>
        <authorList>
            <person name="Raoult D."/>
            <person name="Audic S."/>
            <person name="Robert C."/>
            <person name="Abergel C."/>
            <person name="Renesto P."/>
            <person name="Ogata H."/>
            <person name="La Scola B."/>
            <person name="Susan M."/>
            <person name="Claverie J.-M."/>
        </authorList>
    </citation>
    <scope>NUCLEOTIDE SEQUENCE [LARGE SCALE GENOMIC DNA]</scope>
    <source>
        <strain>Rowbotham-Bradford</strain>
    </source>
</reference>
<dbReference type="EMBL" id="AY653733">
    <property type="protein sequence ID" value="AAV51059.1"/>
    <property type="molecule type" value="Genomic_DNA"/>
</dbReference>
<dbReference type="SMR" id="Q5UR63"/>
<dbReference type="KEGG" id="vg:9925461"/>
<dbReference type="Proteomes" id="UP000001134">
    <property type="component" value="Genome"/>
</dbReference>
<dbReference type="GO" id="GO:0016020">
    <property type="term" value="C:membrane"/>
    <property type="evidence" value="ECO:0007669"/>
    <property type="project" value="UniProtKB-SubCell"/>
</dbReference>
<organismHost>
    <name type="scientific">Acanthamoeba polyphaga</name>
    <name type="common">Amoeba</name>
    <dbReference type="NCBI Taxonomy" id="5757"/>
</organismHost>
<feature type="chain" id="PRO_0000071354" description="Uncharacterized protein R799">
    <location>
        <begin position="1"/>
        <end position="201"/>
    </location>
</feature>
<feature type="transmembrane region" description="Helical" evidence="1">
    <location>
        <begin position="11"/>
        <end position="31"/>
    </location>
</feature>
<evidence type="ECO:0000255" key="1"/>
<evidence type="ECO:0000305" key="2"/>
<keyword id="KW-0472">Membrane</keyword>
<keyword id="KW-1185">Reference proteome</keyword>
<keyword id="KW-0812">Transmembrane</keyword>
<keyword id="KW-1133">Transmembrane helix</keyword>
<protein>
    <recommendedName>
        <fullName>Uncharacterized protein R799</fullName>
    </recommendedName>
</protein>